<name>CH10_CAMJ8</name>
<keyword id="KW-0143">Chaperone</keyword>
<keyword id="KW-0963">Cytoplasm</keyword>
<comment type="function">
    <text evidence="1">Together with the chaperonin GroEL, plays an essential role in assisting protein folding. The GroEL-GroES system forms a nano-cage that allows encapsulation of the non-native substrate proteins and provides a physical environment optimized to promote and accelerate protein folding. GroES binds to the apical surface of the GroEL ring, thereby capping the opening of the GroEL channel.</text>
</comment>
<comment type="subunit">
    <text evidence="1">Heptamer of 7 subunits arranged in a ring. Interacts with the chaperonin GroEL.</text>
</comment>
<comment type="subcellular location">
    <subcellularLocation>
        <location evidence="1">Cytoplasm</location>
    </subcellularLocation>
</comment>
<comment type="similarity">
    <text evidence="1">Belongs to the GroES chaperonin family.</text>
</comment>
<evidence type="ECO:0000255" key="1">
    <source>
        <dbReference type="HAMAP-Rule" id="MF_00580"/>
    </source>
</evidence>
<sequence length="86" mass="9458">MNFQPLGKRVLVKRVEETKTTASGIIIPDNAKEKPLMGEVVAVSKEITDIANGDKIVFAKYGGTEIKLDNNEYLVLNLDDILGILK</sequence>
<feature type="chain" id="PRO_1000072583" description="Co-chaperonin GroES">
    <location>
        <begin position="1"/>
        <end position="86"/>
    </location>
</feature>
<accession>A8FMS5</accession>
<reference key="1">
    <citation type="journal article" date="2007" name="J. Bacteriol.">
        <title>The complete genome sequence of Campylobacter jejuni strain 81116 (NCTC11828).</title>
        <authorList>
            <person name="Pearson B.M."/>
            <person name="Gaskin D.J.H."/>
            <person name="Segers R.P.A.M."/>
            <person name="Wells J.M."/>
            <person name="Nuijten P.J.M."/>
            <person name="van Vliet A.H.M."/>
        </authorList>
    </citation>
    <scope>NUCLEOTIDE SEQUENCE [LARGE SCALE GENOMIC DNA]</scope>
    <source>
        <strain>81116 / NCTC 11828</strain>
    </source>
</reference>
<dbReference type="EMBL" id="CP000814">
    <property type="protein sequence ID" value="ABV52762.1"/>
    <property type="molecule type" value="Genomic_DNA"/>
</dbReference>
<dbReference type="RefSeq" id="WP_002825273.1">
    <property type="nucleotide sequence ID" value="NC_009839.1"/>
</dbReference>
<dbReference type="SMR" id="A8FMS5"/>
<dbReference type="KEGG" id="cju:C8J_1163"/>
<dbReference type="HOGENOM" id="CLU_132825_2_0_7"/>
<dbReference type="GO" id="GO:0005737">
    <property type="term" value="C:cytoplasm"/>
    <property type="evidence" value="ECO:0007669"/>
    <property type="project" value="UniProtKB-SubCell"/>
</dbReference>
<dbReference type="GO" id="GO:0005524">
    <property type="term" value="F:ATP binding"/>
    <property type="evidence" value="ECO:0007669"/>
    <property type="project" value="InterPro"/>
</dbReference>
<dbReference type="GO" id="GO:0046872">
    <property type="term" value="F:metal ion binding"/>
    <property type="evidence" value="ECO:0007669"/>
    <property type="project" value="TreeGrafter"/>
</dbReference>
<dbReference type="GO" id="GO:0044183">
    <property type="term" value="F:protein folding chaperone"/>
    <property type="evidence" value="ECO:0007669"/>
    <property type="project" value="InterPro"/>
</dbReference>
<dbReference type="GO" id="GO:0051087">
    <property type="term" value="F:protein-folding chaperone binding"/>
    <property type="evidence" value="ECO:0007669"/>
    <property type="project" value="TreeGrafter"/>
</dbReference>
<dbReference type="GO" id="GO:0051082">
    <property type="term" value="F:unfolded protein binding"/>
    <property type="evidence" value="ECO:0007669"/>
    <property type="project" value="TreeGrafter"/>
</dbReference>
<dbReference type="GO" id="GO:0051085">
    <property type="term" value="P:chaperone cofactor-dependent protein refolding"/>
    <property type="evidence" value="ECO:0007669"/>
    <property type="project" value="TreeGrafter"/>
</dbReference>
<dbReference type="CDD" id="cd00320">
    <property type="entry name" value="cpn10"/>
    <property type="match status" value="1"/>
</dbReference>
<dbReference type="FunFam" id="2.30.33.40:FF:000001">
    <property type="entry name" value="10 kDa chaperonin"/>
    <property type="match status" value="1"/>
</dbReference>
<dbReference type="Gene3D" id="2.30.33.40">
    <property type="entry name" value="GroES chaperonin"/>
    <property type="match status" value="1"/>
</dbReference>
<dbReference type="HAMAP" id="MF_00580">
    <property type="entry name" value="CH10"/>
    <property type="match status" value="1"/>
</dbReference>
<dbReference type="InterPro" id="IPR020818">
    <property type="entry name" value="Chaperonin_GroES"/>
</dbReference>
<dbReference type="InterPro" id="IPR037124">
    <property type="entry name" value="Chaperonin_GroES_sf"/>
</dbReference>
<dbReference type="InterPro" id="IPR011032">
    <property type="entry name" value="GroES-like_sf"/>
</dbReference>
<dbReference type="NCBIfam" id="NF001537">
    <property type="entry name" value="PRK00364.3-3"/>
    <property type="match status" value="1"/>
</dbReference>
<dbReference type="PANTHER" id="PTHR10772">
    <property type="entry name" value="10 KDA HEAT SHOCK PROTEIN"/>
    <property type="match status" value="1"/>
</dbReference>
<dbReference type="PANTHER" id="PTHR10772:SF58">
    <property type="entry name" value="CO-CHAPERONIN GROES"/>
    <property type="match status" value="1"/>
</dbReference>
<dbReference type="Pfam" id="PF00166">
    <property type="entry name" value="Cpn10"/>
    <property type="match status" value="1"/>
</dbReference>
<dbReference type="PRINTS" id="PR00297">
    <property type="entry name" value="CHAPERONIN10"/>
</dbReference>
<dbReference type="SMART" id="SM00883">
    <property type="entry name" value="Cpn10"/>
    <property type="match status" value="1"/>
</dbReference>
<dbReference type="SUPFAM" id="SSF50129">
    <property type="entry name" value="GroES-like"/>
    <property type="match status" value="1"/>
</dbReference>
<organism>
    <name type="scientific">Campylobacter jejuni subsp. jejuni serotype O:6 (strain 81116 / NCTC 11828)</name>
    <dbReference type="NCBI Taxonomy" id="407148"/>
    <lineage>
        <taxon>Bacteria</taxon>
        <taxon>Pseudomonadati</taxon>
        <taxon>Campylobacterota</taxon>
        <taxon>Epsilonproteobacteria</taxon>
        <taxon>Campylobacterales</taxon>
        <taxon>Campylobacteraceae</taxon>
        <taxon>Campylobacter</taxon>
    </lineage>
</organism>
<proteinExistence type="inferred from homology"/>
<protein>
    <recommendedName>
        <fullName evidence="1">Co-chaperonin GroES</fullName>
    </recommendedName>
    <alternativeName>
        <fullName evidence="1">10 kDa chaperonin</fullName>
    </alternativeName>
    <alternativeName>
        <fullName evidence="1">Chaperonin-10</fullName>
        <shortName evidence="1">Cpn10</shortName>
    </alternativeName>
</protein>
<gene>
    <name evidence="1" type="primary">groES</name>
    <name evidence="1" type="synonym">groS</name>
    <name type="ordered locus">C8J_1163</name>
</gene>